<name>RS16_SALTO</name>
<dbReference type="EMBL" id="CP000667">
    <property type="protein sequence ID" value="ABP53775.1"/>
    <property type="molecule type" value="Genomic_DNA"/>
</dbReference>
<dbReference type="RefSeq" id="WP_011905207.1">
    <property type="nucleotide sequence ID" value="NC_009380.1"/>
</dbReference>
<dbReference type="SMR" id="A4X4H5"/>
<dbReference type="STRING" id="369723.Strop_1305"/>
<dbReference type="KEGG" id="stp:Strop_1305"/>
<dbReference type="PATRIC" id="fig|369723.5.peg.1329"/>
<dbReference type="eggNOG" id="COG0228">
    <property type="taxonomic scope" value="Bacteria"/>
</dbReference>
<dbReference type="HOGENOM" id="CLU_100590_1_1_11"/>
<dbReference type="Proteomes" id="UP000000235">
    <property type="component" value="Chromosome"/>
</dbReference>
<dbReference type="GO" id="GO:0005737">
    <property type="term" value="C:cytoplasm"/>
    <property type="evidence" value="ECO:0007669"/>
    <property type="project" value="UniProtKB-ARBA"/>
</dbReference>
<dbReference type="GO" id="GO:0015935">
    <property type="term" value="C:small ribosomal subunit"/>
    <property type="evidence" value="ECO:0007669"/>
    <property type="project" value="TreeGrafter"/>
</dbReference>
<dbReference type="GO" id="GO:0003735">
    <property type="term" value="F:structural constituent of ribosome"/>
    <property type="evidence" value="ECO:0007669"/>
    <property type="project" value="InterPro"/>
</dbReference>
<dbReference type="GO" id="GO:0006412">
    <property type="term" value="P:translation"/>
    <property type="evidence" value="ECO:0007669"/>
    <property type="project" value="UniProtKB-UniRule"/>
</dbReference>
<dbReference type="Gene3D" id="3.30.1320.10">
    <property type="match status" value="1"/>
</dbReference>
<dbReference type="HAMAP" id="MF_00385">
    <property type="entry name" value="Ribosomal_bS16"/>
    <property type="match status" value="1"/>
</dbReference>
<dbReference type="InterPro" id="IPR000307">
    <property type="entry name" value="Ribosomal_bS16"/>
</dbReference>
<dbReference type="InterPro" id="IPR023803">
    <property type="entry name" value="Ribosomal_bS16_dom_sf"/>
</dbReference>
<dbReference type="NCBIfam" id="NF011093">
    <property type="entry name" value="PRK14520.1"/>
    <property type="match status" value="1"/>
</dbReference>
<dbReference type="NCBIfam" id="TIGR00002">
    <property type="entry name" value="S16"/>
    <property type="match status" value="1"/>
</dbReference>
<dbReference type="PANTHER" id="PTHR12919">
    <property type="entry name" value="30S RIBOSOMAL PROTEIN S16"/>
    <property type="match status" value="1"/>
</dbReference>
<dbReference type="PANTHER" id="PTHR12919:SF20">
    <property type="entry name" value="SMALL RIBOSOMAL SUBUNIT PROTEIN BS16M"/>
    <property type="match status" value="1"/>
</dbReference>
<dbReference type="Pfam" id="PF00886">
    <property type="entry name" value="Ribosomal_S16"/>
    <property type="match status" value="1"/>
</dbReference>
<dbReference type="SUPFAM" id="SSF54565">
    <property type="entry name" value="Ribosomal protein S16"/>
    <property type="match status" value="1"/>
</dbReference>
<comment type="similarity">
    <text evidence="1">Belongs to the bacterial ribosomal protein bS16 family.</text>
</comment>
<accession>A4X4H5</accession>
<proteinExistence type="inferred from homology"/>
<keyword id="KW-1185">Reference proteome</keyword>
<keyword id="KW-0687">Ribonucleoprotein</keyword>
<keyword id="KW-0689">Ribosomal protein</keyword>
<evidence type="ECO:0000255" key="1">
    <source>
        <dbReference type="HAMAP-Rule" id="MF_00385"/>
    </source>
</evidence>
<evidence type="ECO:0000256" key="2">
    <source>
        <dbReference type="SAM" id="MobiDB-lite"/>
    </source>
</evidence>
<evidence type="ECO:0000305" key="3"/>
<organism>
    <name type="scientific">Salinispora tropica (strain ATCC BAA-916 / DSM 44818 / JCM 13857 / NBRC 105044 / CNB-440)</name>
    <dbReference type="NCBI Taxonomy" id="369723"/>
    <lineage>
        <taxon>Bacteria</taxon>
        <taxon>Bacillati</taxon>
        <taxon>Actinomycetota</taxon>
        <taxon>Actinomycetes</taxon>
        <taxon>Micromonosporales</taxon>
        <taxon>Micromonosporaceae</taxon>
        <taxon>Salinispora</taxon>
    </lineage>
</organism>
<protein>
    <recommendedName>
        <fullName evidence="1">Small ribosomal subunit protein bS16</fullName>
    </recommendedName>
    <alternativeName>
        <fullName evidence="3">30S ribosomal protein S16</fullName>
    </alternativeName>
</protein>
<sequence>MAVKIRLLRMGKIRNPQYRIVIADSRTKRDGRAIEFVGIYQPKHDPSVIEVKSDRVQYWLSVGAQPSEAVQRLLEKTGDWQKFKGLPAPEPLKVAPERVDRKAAYEAEAKAAAGLAEAPTKPAKKAAKAEAAPKTDEAAPKTEEQAGAGSGEQG</sequence>
<reference key="1">
    <citation type="journal article" date="2007" name="Proc. Natl. Acad. Sci. U.S.A.">
        <title>Genome sequencing reveals complex secondary metabolome in the marine actinomycete Salinispora tropica.</title>
        <authorList>
            <person name="Udwary D.W."/>
            <person name="Zeigler L."/>
            <person name="Asolkar R.N."/>
            <person name="Singan V."/>
            <person name="Lapidus A."/>
            <person name="Fenical W."/>
            <person name="Jensen P.R."/>
            <person name="Moore B.S."/>
        </authorList>
    </citation>
    <scope>NUCLEOTIDE SEQUENCE [LARGE SCALE GENOMIC DNA]</scope>
    <source>
        <strain>ATCC BAA-916 / DSM 44818 / JCM 13857 / NBRC 105044 / CNB-440</strain>
    </source>
</reference>
<feature type="chain" id="PRO_1000080168" description="Small ribosomal subunit protein bS16">
    <location>
        <begin position="1"/>
        <end position="154"/>
    </location>
</feature>
<feature type="region of interest" description="Disordered" evidence="2">
    <location>
        <begin position="111"/>
        <end position="154"/>
    </location>
</feature>
<feature type="compositionally biased region" description="Low complexity" evidence="2">
    <location>
        <begin position="111"/>
        <end position="121"/>
    </location>
</feature>
<feature type="compositionally biased region" description="Basic and acidic residues" evidence="2">
    <location>
        <begin position="127"/>
        <end position="144"/>
    </location>
</feature>
<gene>
    <name evidence="1" type="primary">rpsP</name>
    <name type="ordered locus">Strop_1305</name>
</gene>